<comment type="function">
    <text evidence="1">Involved in chemotaxis. Part of a chemotaxis signal transduction system that modulates chemotaxis in response to various stimuli. Catalyzes the demethylation of specific methylglutamate residues introduced into the chemoreceptors (methyl-accepting chemotaxis proteins or MCP) by CheR. Also mediates the irreversible deamidation of specific glutamine residues to glutamic acid.</text>
</comment>
<comment type="catalytic activity">
    <reaction evidence="1">
        <text>[protein]-L-glutamate 5-O-methyl ester + H2O = L-glutamyl-[protein] + methanol + H(+)</text>
        <dbReference type="Rhea" id="RHEA:23236"/>
        <dbReference type="Rhea" id="RHEA-COMP:10208"/>
        <dbReference type="Rhea" id="RHEA-COMP:10311"/>
        <dbReference type="ChEBI" id="CHEBI:15377"/>
        <dbReference type="ChEBI" id="CHEBI:15378"/>
        <dbReference type="ChEBI" id="CHEBI:17790"/>
        <dbReference type="ChEBI" id="CHEBI:29973"/>
        <dbReference type="ChEBI" id="CHEBI:82795"/>
        <dbReference type="EC" id="3.1.1.61"/>
    </reaction>
</comment>
<comment type="catalytic activity">
    <reaction evidence="1">
        <text>L-glutaminyl-[protein] + H2O = L-glutamyl-[protein] + NH4(+)</text>
        <dbReference type="Rhea" id="RHEA:16441"/>
        <dbReference type="Rhea" id="RHEA-COMP:10207"/>
        <dbReference type="Rhea" id="RHEA-COMP:10208"/>
        <dbReference type="ChEBI" id="CHEBI:15377"/>
        <dbReference type="ChEBI" id="CHEBI:28938"/>
        <dbReference type="ChEBI" id="CHEBI:29973"/>
        <dbReference type="ChEBI" id="CHEBI:30011"/>
        <dbReference type="EC" id="3.5.1.44"/>
    </reaction>
</comment>
<comment type="subcellular location">
    <subcellularLocation>
        <location evidence="1">Cytoplasm</location>
    </subcellularLocation>
</comment>
<comment type="domain">
    <text evidence="1">Contains a C-terminal catalytic domain, and an N-terminal region which modulates catalytic activity.</text>
</comment>
<comment type="PTM">
    <text evidence="1">Phosphorylated by CheA. Phosphorylation of the N-terminal regulatory domain activates the methylesterase activity.</text>
</comment>
<comment type="similarity">
    <text evidence="1">Belongs to the CheB family.</text>
</comment>
<gene>
    <name evidence="1" type="primary">cheB1</name>
    <name type="ordered locus">Sde_2160</name>
</gene>
<keyword id="KW-0145">Chemotaxis</keyword>
<keyword id="KW-0963">Cytoplasm</keyword>
<keyword id="KW-0378">Hydrolase</keyword>
<keyword id="KW-0597">Phosphoprotein</keyword>
<keyword id="KW-1185">Reference proteome</keyword>
<sequence>MAYKVLVVDDSQFFQVRLKQIINEHPDLEVVGIAANGQEAIDLEESLRPDIISMDYEMPHLDGISAVRSILSKRPIPIVMFSSMTYEGATITLEALDAGAVDFIPKNFAEVSRDSVVLKKRLHEKLLLFAQKAKPSVAARSTTQPSGVRPSALGANLSSSRSPRPASSAPSAPKKRIKGLVKLVAIGASTGGPVAVSEIITRLPANFPVPVIVAQHMPENFTKAFSERLNRQSAVEVREAQDGDLLKSGVVYVAPGGNQLMVDKTGRSIRILDGDARLTYKPSVDVLFASAASAMGDKVLAIVLTGMGADGCDGAKLLKQKGATIWGQDKDSCVVYGMPAAVAKAGLTDEVLPLDQVWQRLVSDV</sequence>
<name>CHEB1_SACD2</name>
<proteinExistence type="inferred from homology"/>
<reference key="1">
    <citation type="journal article" date="2008" name="PLoS Genet.">
        <title>Complete genome sequence of the complex carbohydrate-degrading marine bacterium, Saccharophagus degradans strain 2-40 T.</title>
        <authorList>
            <person name="Weiner R.M."/>
            <person name="Taylor L.E. II"/>
            <person name="Henrissat B."/>
            <person name="Hauser L."/>
            <person name="Land M."/>
            <person name="Coutinho P.M."/>
            <person name="Rancurel C."/>
            <person name="Saunders E.H."/>
            <person name="Longmire A.G."/>
            <person name="Zhang H."/>
            <person name="Bayer E.A."/>
            <person name="Gilbert H.J."/>
            <person name="Larimer F."/>
            <person name="Zhulin I.B."/>
            <person name="Ekborg N.A."/>
            <person name="Lamed R."/>
            <person name="Richardson P.M."/>
            <person name="Borovok I."/>
            <person name="Hutcheson S."/>
        </authorList>
    </citation>
    <scope>NUCLEOTIDE SEQUENCE [LARGE SCALE GENOMIC DNA]</scope>
    <source>
        <strain>2-40 / ATCC 43961 / DSM 17024</strain>
    </source>
</reference>
<feature type="chain" id="PRO_0000264315" description="Protein-glutamate methylesterase/protein-glutamine glutaminase 1">
    <location>
        <begin position="1"/>
        <end position="365"/>
    </location>
</feature>
<feature type="domain" description="Response regulatory" evidence="1">
    <location>
        <begin position="4"/>
        <end position="121"/>
    </location>
</feature>
<feature type="domain" description="CheB-type methylesterase" evidence="1">
    <location>
        <begin position="182"/>
        <end position="365"/>
    </location>
</feature>
<feature type="region of interest" description="Disordered" evidence="2">
    <location>
        <begin position="138"/>
        <end position="173"/>
    </location>
</feature>
<feature type="compositionally biased region" description="Low complexity" evidence="2">
    <location>
        <begin position="158"/>
        <end position="172"/>
    </location>
</feature>
<feature type="active site" evidence="1">
    <location>
        <position position="189"/>
    </location>
</feature>
<feature type="active site" evidence="1">
    <location>
        <position position="216"/>
    </location>
</feature>
<feature type="active site" evidence="1">
    <location>
        <position position="310"/>
    </location>
</feature>
<feature type="modified residue" description="4-aspartylphosphate" evidence="1">
    <location>
        <position position="55"/>
    </location>
</feature>
<protein>
    <recommendedName>
        <fullName evidence="1">Protein-glutamate methylesterase/protein-glutamine glutaminase 1</fullName>
        <ecNumber evidence="1">3.1.1.61</ecNumber>
        <ecNumber evidence="1">3.5.1.44</ecNumber>
    </recommendedName>
</protein>
<organism>
    <name type="scientific">Saccharophagus degradans (strain 2-40 / ATCC 43961 / DSM 17024)</name>
    <dbReference type="NCBI Taxonomy" id="203122"/>
    <lineage>
        <taxon>Bacteria</taxon>
        <taxon>Pseudomonadati</taxon>
        <taxon>Pseudomonadota</taxon>
        <taxon>Gammaproteobacteria</taxon>
        <taxon>Cellvibrionales</taxon>
        <taxon>Cellvibrionaceae</taxon>
        <taxon>Saccharophagus</taxon>
    </lineage>
</organism>
<dbReference type="EC" id="3.1.1.61" evidence="1"/>
<dbReference type="EC" id="3.5.1.44" evidence="1"/>
<dbReference type="EMBL" id="CP000282">
    <property type="protein sequence ID" value="ABD81420.1"/>
    <property type="molecule type" value="Genomic_DNA"/>
</dbReference>
<dbReference type="RefSeq" id="WP_011468638.1">
    <property type="nucleotide sequence ID" value="NC_007912.1"/>
</dbReference>
<dbReference type="SMR" id="Q21IQ9"/>
<dbReference type="STRING" id="203122.Sde_2160"/>
<dbReference type="GeneID" id="98613831"/>
<dbReference type="KEGG" id="sde:Sde_2160"/>
<dbReference type="eggNOG" id="COG2201">
    <property type="taxonomic scope" value="Bacteria"/>
</dbReference>
<dbReference type="HOGENOM" id="CLU_000445_51_0_6"/>
<dbReference type="OrthoDB" id="9793421at2"/>
<dbReference type="Proteomes" id="UP000001947">
    <property type="component" value="Chromosome"/>
</dbReference>
<dbReference type="GO" id="GO:0005737">
    <property type="term" value="C:cytoplasm"/>
    <property type="evidence" value="ECO:0007669"/>
    <property type="project" value="UniProtKB-SubCell"/>
</dbReference>
<dbReference type="GO" id="GO:0000156">
    <property type="term" value="F:phosphorelay response regulator activity"/>
    <property type="evidence" value="ECO:0007669"/>
    <property type="project" value="InterPro"/>
</dbReference>
<dbReference type="GO" id="GO:0008984">
    <property type="term" value="F:protein-glutamate methylesterase activity"/>
    <property type="evidence" value="ECO:0007669"/>
    <property type="project" value="UniProtKB-UniRule"/>
</dbReference>
<dbReference type="GO" id="GO:0050568">
    <property type="term" value="F:protein-glutamine glutaminase activity"/>
    <property type="evidence" value="ECO:0007669"/>
    <property type="project" value="UniProtKB-UniRule"/>
</dbReference>
<dbReference type="GO" id="GO:0006935">
    <property type="term" value="P:chemotaxis"/>
    <property type="evidence" value="ECO:0007669"/>
    <property type="project" value="UniProtKB-UniRule"/>
</dbReference>
<dbReference type="CDD" id="cd16432">
    <property type="entry name" value="CheB_Rec"/>
    <property type="match status" value="1"/>
</dbReference>
<dbReference type="CDD" id="cd17541">
    <property type="entry name" value="REC_CheB-like"/>
    <property type="match status" value="1"/>
</dbReference>
<dbReference type="Gene3D" id="3.40.50.2300">
    <property type="match status" value="1"/>
</dbReference>
<dbReference type="Gene3D" id="3.40.50.180">
    <property type="entry name" value="Methylesterase CheB, C-terminal domain"/>
    <property type="match status" value="1"/>
</dbReference>
<dbReference type="HAMAP" id="MF_00099">
    <property type="entry name" value="CheB_chemtxs"/>
    <property type="match status" value="1"/>
</dbReference>
<dbReference type="InterPro" id="IPR008248">
    <property type="entry name" value="CheB-like"/>
</dbReference>
<dbReference type="InterPro" id="IPR035909">
    <property type="entry name" value="CheB_C"/>
</dbReference>
<dbReference type="InterPro" id="IPR011006">
    <property type="entry name" value="CheY-like_superfamily"/>
</dbReference>
<dbReference type="InterPro" id="IPR000673">
    <property type="entry name" value="Sig_transdc_resp-reg_Me-estase"/>
</dbReference>
<dbReference type="InterPro" id="IPR001789">
    <property type="entry name" value="Sig_transdc_resp-reg_receiver"/>
</dbReference>
<dbReference type="NCBIfam" id="NF001965">
    <property type="entry name" value="PRK00742.1"/>
    <property type="match status" value="1"/>
</dbReference>
<dbReference type="PANTHER" id="PTHR42872">
    <property type="entry name" value="PROTEIN-GLUTAMATE METHYLESTERASE/PROTEIN-GLUTAMINE GLUTAMINASE"/>
    <property type="match status" value="1"/>
</dbReference>
<dbReference type="PANTHER" id="PTHR42872:SF3">
    <property type="entry name" value="PROTEIN-GLUTAMATE METHYLESTERASE_PROTEIN-GLUTAMINE GLUTAMINASE 1"/>
    <property type="match status" value="1"/>
</dbReference>
<dbReference type="Pfam" id="PF01339">
    <property type="entry name" value="CheB_methylest"/>
    <property type="match status" value="1"/>
</dbReference>
<dbReference type="Pfam" id="PF00072">
    <property type="entry name" value="Response_reg"/>
    <property type="match status" value="1"/>
</dbReference>
<dbReference type="PIRSF" id="PIRSF000876">
    <property type="entry name" value="RR_chemtxs_CheB"/>
    <property type="match status" value="1"/>
</dbReference>
<dbReference type="SMART" id="SM00448">
    <property type="entry name" value="REC"/>
    <property type="match status" value="1"/>
</dbReference>
<dbReference type="SUPFAM" id="SSF52172">
    <property type="entry name" value="CheY-like"/>
    <property type="match status" value="1"/>
</dbReference>
<dbReference type="SUPFAM" id="SSF52738">
    <property type="entry name" value="Methylesterase CheB, C-terminal domain"/>
    <property type="match status" value="1"/>
</dbReference>
<dbReference type="PROSITE" id="PS50122">
    <property type="entry name" value="CHEB"/>
    <property type="match status" value="1"/>
</dbReference>
<dbReference type="PROSITE" id="PS50110">
    <property type="entry name" value="RESPONSE_REGULATORY"/>
    <property type="match status" value="1"/>
</dbReference>
<accession>Q21IQ9</accession>
<evidence type="ECO:0000255" key="1">
    <source>
        <dbReference type="HAMAP-Rule" id="MF_00099"/>
    </source>
</evidence>
<evidence type="ECO:0000256" key="2">
    <source>
        <dbReference type="SAM" id="MobiDB-lite"/>
    </source>
</evidence>